<organism>
    <name type="scientific">Staphylococcus epidermidis (strain ATCC 12228 / FDA PCI 1200)</name>
    <dbReference type="NCBI Taxonomy" id="176280"/>
    <lineage>
        <taxon>Bacteria</taxon>
        <taxon>Bacillati</taxon>
        <taxon>Bacillota</taxon>
        <taxon>Bacilli</taxon>
        <taxon>Bacillales</taxon>
        <taxon>Staphylococcaceae</taxon>
        <taxon>Staphylococcus</taxon>
    </lineage>
</organism>
<protein>
    <recommendedName>
        <fullName>UPF0478 protein SE_1412</fullName>
    </recommendedName>
</protein>
<feature type="chain" id="PRO_0000299442" description="UPF0478 protein SE_1412">
    <location>
        <begin position="1"/>
        <end position="163"/>
    </location>
</feature>
<feature type="transmembrane region" description="Helical" evidence="1">
    <location>
        <begin position="7"/>
        <end position="27"/>
    </location>
</feature>
<name>Y1412_STAES</name>
<sequence length="163" mass="18032">MDWILPIAGIIAAIAFLILCIGIVVVLISVKKNLDYVAKTLDGVEGQVQGITRETTDLLHKVNRLTEDIQGKVDRLNSVVDAVKGIGDSVQNLNGSVDRVTNSITHNISQNEDKISQVVQWSNVAMEIADKWQNRYNRRGSANYKTNTVADDANHSYNSRVNK</sequence>
<comment type="subcellular location">
    <subcellularLocation>
        <location evidence="2">Cell membrane</location>
        <topology evidence="2">Single-pass membrane protein</topology>
    </subcellularLocation>
</comment>
<comment type="similarity">
    <text evidence="2">Belongs to the UPF0478 family.</text>
</comment>
<accession>Q8CNV5</accession>
<keyword id="KW-1003">Cell membrane</keyword>
<keyword id="KW-0472">Membrane</keyword>
<keyword id="KW-0812">Transmembrane</keyword>
<keyword id="KW-1133">Transmembrane helix</keyword>
<reference key="1">
    <citation type="journal article" date="2003" name="Mol. Microbiol.">
        <title>Genome-based analysis of virulence genes in a non-biofilm-forming Staphylococcus epidermidis strain (ATCC 12228).</title>
        <authorList>
            <person name="Zhang Y.-Q."/>
            <person name="Ren S.-X."/>
            <person name="Li H.-L."/>
            <person name="Wang Y.-X."/>
            <person name="Fu G."/>
            <person name="Yang J."/>
            <person name="Qin Z.-Q."/>
            <person name="Miao Y.-G."/>
            <person name="Wang W.-Y."/>
            <person name="Chen R.-S."/>
            <person name="Shen Y."/>
            <person name="Chen Z."/>
            <person name="Yuan Z.-H."/>
            <person name="Zhao G.-P."/>
            <person name="Qu D."/>
            <person name="Danchin A."/>
            <person name="Wen Y.-M."/>
        </authorList>
    </citation>
    <scope>NUCLEOTIDE SEQUENCE [LARGE SCALE GENOMIC DNA]</scope>
    <source>
        <strain>ATCC 12228 / FDA PCI 1200</strain>
    </source>
</reference>
<evidence type="ECO:0000255" key="1"/>
<evidence type="ECO:0000305" key="2"/>
<gene>
    <name type="ordered locus">SE_1412</name>
</gene>
<proteinExistence type="inferred from homology"/>
<dbReference type="EMBL" id="AE015929">
    <property type="protein sequence ID" value="AAO05011.1"/>
    <property type="molecule type" value="Genomic_DNA"/>
</dbReference>
<dbReference type="RefSeq" id="NP_764967.1">
    <property type="nucleotide sequence ID" value="NC_004461.1"/>
</dbReference>
<dbReference type="RefSeq" id="WP_001830868.1">
    <property type="nucleotide sequence ID" value="NZ_WBME01000009.1"/>
</dbReference>
<dbReference type="SMR" id="Q8CNV5"/>
<dbReference type="KEGG" id="sep:SE_1412"/>
<dbReference type="PATRIC" id="fig|176280.10.peg.1379"/>
<dbReference type="eggNOG" id="COG4768">
    <property type="taxonomic scope" value="Bacteria"/>
</dbReference>
<dbReference type="HOGENOM" id="CLU_115870_0_0_9"/>
<dbReference type="OrthoDB" id="2366030at2"/>
<dbReference type="Proteomes" id="UP000001411">
    <property type="component" value="Chromosome"/>
</dbReference>
<dbReference type="GO" id="GO:0005886">
    <property type="term" value="C:plasma membrane"/>
    <property type="evidence" value="ECO:0007669"/>
    <property type="project" value="UniProtKB-SubCell"/>
</dbReference>
<dbReference type="Gene3D" id="1.10.287.950">
    <property type="entry name" value="Methyl-accepting chemotaxis protein"/>
    <property type="match status" value="1"/>
</dbReference>
<dbReference type="InterPro" id="IPR009293">
    <property type="entry name" value="UPF0478"/>
</dbReference>
<dbReference type="PANTHER" id="PTHR40070">
    <property type="entry name" value="UPF0478 PROTEIN YTXG"/>
    <property type="match status" value="1"/>
</dbReference>
<dbReference type="PANTHER" id="PTHR40070:SF1">
    <property type="entry name" value="UPF0478 PROTEIN YTXG"/>
    <property type="match status" value="1"/>
</dbReference>
<dbReference type="Pfam" id="PF06103">
    <property type="entry name" value="DUF948"/>
    <property type="match status" value="1"/>
</dbReference>
<dbReference type="SUPFAM" id="SSF58104">
    <property type="entry name" value="Methyl-accepting chemotaxis protein (MCP) signaling domain"/>
    <property type="match status" value="1"/>
</dbReference>